<keyword id="KW-0687">Ribonucleoprotein</keyword>
<keyword id="KW-0689">Ribosomal protein</keyword>
<keyword id="KW-0694">RNA-binding</keyword>
<keyword id="KW-0699">rRNA-binding</keyword>
<feature type="chain" id="PRO_1000114456" description="Small ribosomal subunit protein bS18">
    <location>
        <begin position="1"/>
        <end position="79"/>
    </location>
</feature>
<evidence type="ECO:0000255" key="1">
    <source>
        <dbReference type="HAMAP-Rule" id="MF_00270"/>
    </source>
</evidence>
<evidence type="ECO:0000305" key="2"/>
<accession>B5E6A4</accession>
<comment type="function">
    <text evidence="1">Binds as a heterodimer with protein bS6 to the central domain of the 16S rRNA, where it helps stabilize the platform of the 30S subunit.</text>
</comment>
<comment type="subunit">
    <text evidence="1">Part of the 30S ribosomal subunit. Forms a tight heterodimer with protein bS6.</text>
</comment>
<comment type="similarity">
    <text evidence="1">Belongs to the bacterial ribosomal protein bS18 family.</text>
</comment>
<sequence>MAQQRRGGFKRRKKVDYIAANKIEYVDYKDTELLSRFVSERGKILPRRVTGTSAKNQRKVTXAIKRARVMALMPFVNED</sequence>
<gene>
    <name evidence="1" type="primary">rpsR</name>
    <name type="ordered locus">SPG_1465</name>
</gene>
<name>RS18_STRP4</name>
<organism>
    <name type="scientific">Streptococcus pneumoniae serotype 19F (strain G54)</name>
    <dbReference type="NCBI Taxonomy" id="512566"/>
    <lineage>
        <taxon>Bacteria</taxon>
        <taxon>Bacillati</taxon>
        <taxon>Bacillota</taxon>
        <taxon>Bacilli</taxon>
        <taxon>Lactobacillales</taxon>
        <taxon>Streptococcaceae</taxon>
        <taxon>Streptococcus</taxon>
    </lineage>
</organism>
<dbReference type="EMBL" id="CP001015">
    <property type="protein sequence ID" value="ACF54850.1"/>
    <property type="molecule type" value="Genomic_DNA"/>
</dbReference>
<dbReference type="KEGG" id="spx:SPG_1465"/>
<dbReference type="HOGENOM" id="CLU_148710_2_2_9"/>
<dbReference type="GO" id="GO:0022627">
    <property type="term" value="C:cytosolic small ribosomal subunit"/>
    <property type="evidence" value="ECO:0007669"/>
    <property type="project" value="TreeGrafter"/>
</dbReference>
<dbReference type="GO" id="GO:0070181">
    <property type="term" value="F:small ribosomal subunit rRNA binding"/>
    <property type="evidence" value="ECO:0007669"/>
    <property type="project" value="TreeGrafter"/>
</dbReference>
<dbReference type="GO" id="GO:0003735">
    <property type="term" value="F:structural constituent of ribosome"/>
    <property type="evidence" value="ECO:0007669"/>
    <property type="project" value="InterPro"/>
</dbReference>
<dbReference type="GO" id="GO:0006412">
    <property type="term" value="P:translation"/>
    <property type="evidence" value="ECO:0007669"/>
    <property type="project" value="UniProtKB-UniRule"/>
</dbReference>
<dbReference type="FunFam" id="4.10.640.10:FF:000003">
    <property type="entry name" value="30S ribosomal protein S18"/>
    <property type="match status" value="1"/>
</dbReference>
<dbReference type="Gene3D" id="4.10.640.10">
    <property type="entry name" value="Ribosomal protein S18"/>
    <property type="match status" value="1"/>
</dbReference>
<dbReference type="HAMAP" id="MF_00270">
    <property type="entry name" value="Ribosomal_bS18"/>
    <property type="match status" value="1"/>
</dbReference>
<dbReference type="InterPro" id="IPR001648">
    <property type="entry name" value="Ribosomal_bS18"/>
</dbReference>
<dbReference type="InterPro" id="IPR018275">
    <property type="entry name" value="Ribosomal_bS18_CS"/>
</dbReference>
<dbReference type="InterPro" id="IPR036870">
    <property type="entry name" value="Ribosomal_bS18_sf"/>
</dbReference>
<dbReference type="NCBIfam" id="TIGR00165">
    <property type="entry name" value="S18"/>
    <property type="match status" value="1"/>
</dbReference>
<dbReference type="PANTHER" id="PTHR13479">
    <property type="entry name" value="30S RIBOSOMAL PROTEIN S18"/>
    <property type="match status" value="1"/>
</dbReference>
<dbReference type="PANTHER" id="PTHR13479:SF40">
    <property type="entry name" value="SMALL RIBOSOMAL SUBUNIT PROTEIN BS18M"/>
    <property type="match status" value="1"/>
</dbReference>
<dbReference type="Pfam" id="PF01084">
    <property type="entry name" value="Ribosomal_S18"/>
    <property type="match status" value="1"/>
</dbReference>
<dbReference type="PRINTS" id="PR00974">
    <property type="entry name" value="RIBOSOMALS18"/>
</dbReference>
<dbReference type="SUPFAM" id="SSF46911">
    <property type="entry name" value="Ribosomal protein S18"/>
    <property type="match status" value="1"/>
</dbReference>
<dbReference type="PROSITE" id="PS00057">
    <property type="entry name" value="RIBOSOMAL_S18"/>
    <property type="match status" value="1"/>
</dbReference>
<protein>
    <recommendedName>
        <fullName evidence="1">Small ribosomal subunit protein bS18</fullName>
    </recommendedName>
    <alternativeName>
        <fullName evidence="2">30S ribosomal protein S18</fullName>
    </alternativeName>
</protein>
<proteinExistence type="inferred from homology"/>
<reference key="1">
    <citation type="journal article" date="2001" name="Microb. Drug Resist.">
        <title>Annotated draft genomic sequence from a Streptococcus pneumoniae type 19F clinical isolate.</title>
        <authorList>
            <person name="Dopazo J."/>
            <person name="Mendoza A."/>
            <person name="Herrero J."/>
            <person name="Caldara F."/>
            <person name="Humbert Y."/>
            <person name="Friedli L."/>
            <person name="Guerrier M."/>
            <person name="Grand-Schenk E."/>
            <person name="Gandin C."/>
            <person name="de Francesco M."/>
            <person name="Polissi A."/>
            <person name="Buell G."/>
            <person name="Feger G."/>
            <person name="Garcia E."/>
            <person name="Peitsch M."/>
            <person name="Garcia-Bustos J.F."/>
        </authorList>
    </citation>
    <scope>NUCLEOTIDE SEQUENCE [LARGE SCALE GENOMIC DNA]</scope>
    <source>
        <strain>G54</strain>
    </source>
</reference>
<reference key="2">
    <citation type="submission" date="2008-03" db="EMBL/GenBank/DDBJ databases">
        <title>Pneumococcal beta glucoside metabolism investigated by whole genome comparison.</title>
        <authorList>
            <person name="Mulas L."/>
            <person name="Trappetti C."/>
            <person name="Hakenbeck R."/>
            <person name="Iannelli F."/>
            <person name="Pozzi G."/>
            <person name="Davidsen T.M."/>
            <person name="Tettelin H."/>
            <person name="Oggioni M."/>
        </authorList>
    </citation>
    <scope>NUCLEOTIDE SEQUENCE [LARGE SCALE GENOMIC DNA]</scope>
    <source>
        <strain>G54</strain>
    </source>
</reference>